<comment type="function">
    <text evidence="1">One of the components of the core complex of photosystem II (PSII). PSII is a light-driven water:plastoquinone oxidoreductase that uses light energy to abstract electrons from H(2)O, generating O(2) and a proton gradient subsequently used for ATP formation. It consists of a core antenna complex that captures photons, and an electron transfer chain that converts photonic excitation into a charge separation. This subunit is found at the monomer-monomer interface and is required for correct PSII assembly and/or dimerization.</text>
</comment>
<comment type="subunit">
    <text evidence="1">PSII is composed of 1 copy each of membrane proteins PsbA, PsbB, PsbC, PsbD, PsbE, PsbF, PsbH, PsbI, PsbJ, PsbK, PsbL, PsbM, PsbT, PsbX, PsbY, PsbZ, Psb30/Ycf12, at least 3 peripheral proteins of the oxygen-evolving complex and a large number of cofactors. It forms dimeric complexes.</text>
</comment>
<comment type="subcellular location">
    <subcellularLocation>
        <location evidence="1">Plastid</location>
        <location evidence="1">Chloroplast thylakoid membrane</location>
        <topology evidence="1">Single-pass membrane protein</topology>
    </subcellularLocation>
</comment>
<comment type="similarity">
    <text evidence="1">Belongs to the PsbL family.</text>
</comment>
<feature type="chain" id="PRO_0000306222" description="Photosystem II reaction center protein L">
    <location>
        <begin position="1"/>
        <end position="38"/>
    </location>
</feature>
<feature type="transmembrane region" description="Helical" evidence="1">
    <location>
        <begin position="17"/>
        <end position="37"/>
    </location>
</feature>
<proteinExistence type="inferred from homology"/>
<gene>
    <name evidence="1" type="primary">psbL</name>
</gene>
<name>PSBL_ARAHI</name>
<reference key="1">
    <citation type="submission" date="2007-03" db="EMBL/GenBank/DDBJ databases">
        <title>Sequencing analysis of Arabis hirsuta chloroplast DNA.</title>
        <authorList>
            <person name="Hosouchi T."/>
            <person name="Tsuruoka H."/>
            <person name="Kotani H."/>
        </authorList>
    </citation>
    <scope>NUCLEOTIDE SEQUENCE [LARGE SCALE GENOMIC DNA]</scope>
</reference>
<evidence type="ECO:0000255" key="1">
    <source>
        <dbReference type="HAMAP-Rule" id="MF_01317"/>
    </source>
</evidence>
<keyword id="KW-0150">Chloroplast</keyword>
<keyword id="KW-0472">Membrane</keyword>
<keyword id="KW-0602">Photosynthesis</keyword>
<keyword id="KW-0604">Photosystem II</keyword>
<keyword id="KW-0934">Plastid</keyword>
<keyword id="KW-0674">Reaction center</keyword>
<keyword id="KW-0793">Thylakoid</keyword>
<keyword id="KW-0812">Transmembrane</keyword>
<keyword id="KW-1133">Transmembrane helix</keyword>
<dbReference type="EMBL" id="AP009369">
    <property type="protein sequence ID" value="BAF50038.1"/>
    <property type="molecule type" value="Genomic_DNA"/>
</dbReference>
<dbReference type="RefSeq" id="YP_001123214.1">
    <property type="nucleotide sequence ID" value="NC_009268.1"/>
</dbReference>
<dbReference type="SMR" id="A4QK33"/>
<dbReference type="GeneID" id="4962532"/>
<dbReference type="GO" id="GO:0009535">
    <property type="term" value="C:chloroplast thylakoid membrane"/>
    <property type="evidence" value="ECO:0007669"/>
    <property type="project" value="UniProtKB-SubCell"/>
</dbReference>
<dbReference type="GO" id="GO:0009539">
    <property type="term" value="C:photosystem II reaction center"/>
    <property type="evidence" value="ECO:0007669"/>
    <property type="project" value="InterPro"/>
</dbReference>
<dbReference type="GO" id="GO:0015979">
    <property type="term" value="P:photosynthesis"/>
    <property type="evidence" value="ECO:0007669"/>
    <property type="project" value="UniProtKB-UniRule"/>
</dbReference>
<dbReference type="HAMAP" id="MF_01317">
    <property type="entry name" value="PSII_PsbL"/>
    <property type="match status" value="1"/>
</dbReference>
<dbReference type="InterPro" id="IPR003372">
    <property type="entry name" value="PSII_PsbL"/>
</dbReference>
<dbReference type="InterPro" id="IPR037266">
    <property type="entry name" value="PSII_PsbL_sf"/>
</dbReference>
<dbReference type="NCBIfam" id="NF001972">
    <property type="entry name" value="PRK00753.1"/>
    <property type="match status" value="1"/>
</dbReference>
<dbReference type="Pfam" id="PF02419">
    <property type="entry name" value="PsbL"/>
    <property type="match status" value="1"/>
</dbReference>
<dbReference type="SUPFAM" id="SSF161017">
    <property type="entry name" value="Photosystem II reaction center protein L, PsbL"/>
    <property type="match status" value="1"/>
</dbReference>
<accession>A4QK33</accession>
<protein>
    <recommendedName>
        <fullName evidence="1">Photosystem II reaction center protein L</fullName>
        <shortName evidence="1">PSII-L</shortName>
    </recommendedName>
</protein>
<sequence length="38" mass="4497">MTQSNPNEQNVELNRTSLYWGLLLIFVLAVLFSNYFFN</sequence>
<geneLocation type="chloroplast"/>
<organism>
    <name type="scientific">Arabis hirsuta</name>
    <name type="common">Hairy rock-cress</name>
    <name type="synonym">Turritis hirsuta</name>
    <dbReference type="NCBI Taxonomy" id="78191"/>
    <lineage>
        <taxon>Eukaryota</taxon>
        <taxon>Viridiplantae</taxon>
        <taxon>Streptophyta</taxon>
        <taxon>Embryophyta</taxon>
        <taxon>Tracheophyta</taxon>
        <taxon>Spermatophyta</taxon>
        <taxon>Magnoliopsida</taxon>
        <taxon>eudicotyledons</taxon>
        <taxon>Gunneridae</taxon>
        <taxon>Pentapetalae</taxon>
        <taxon>rosids</taxon>
        <taxon>malvids</taxon>
        <taxon>Brassicales</taxon>
        <taxon>Brassicaceae</taxon>
        <taxon>Arabideae</taxon>
        <taxon>Arabis</taxon>
    </lineage>
</organism>